<name>Y253_CAMJE</name>
<gene>
    <name type="ordered locus">Cj0253</name>
</gene>
<accession>Q9PIP2</accession>
<accession>Q0PBQ2</accession>
<keyword id="KW-1185">Reference proteome</keyword>
<reference key="1">
    <citation type="journal article" date="2000" name="Nature">
        <title>The genome sequence of the food-borne pathogen Campylobacter jejuni reveals hypervariable sequences.</title>
        <authorList>
            <person name="Parkhill J."/>
            <person name="Wren B.W."/>
            <person name="Mungall K.L."/>
            <person name="Ketley J.M."/>
            <person name="Churcher C.M."/>
            <person name="Basham D."/>
            <person name="Chillingworth T."/>
            <person name="Davies R.M."/>
            <person name="Feltwell T."/>
            <person name="Holroyd S."/>
            <person name="Jagels K."/>
            <person name="Karlyshev A.V."/>
            <person name="Moule S."/>
            <person name="Pallen M.J."/>
            <person name="Penn C.W."/>
            <person name="Quail M.A."/>
            <person name="Rajandream M.A."/>
            <person name="Rutherford K.M."/>
            <person name="van Vliet A.H.M."/>
            <person name="Whitehead S."/>
            <person name="Barrell B.G."/>
        </authorList>
    </citation>
    <scope>NUCLEOTIDE SEQUENCE [LARGE SCALE GENOMIC DNA]</scope>
    <source>
        <strain>ATCC 700819 / NCTC 11168</strain>
    </source>
</reference>
<comment type="similarity">
    <text evidence="1">To H.pylori HP0495/JHP0447.</text>
</comment>
<protein>
    <recommendedName>
        <fullName>Uncharacterized protein Cj0253</fullName>
    </recommendedName>
</protein>
<proteinExistence type="predicted"/>
<feature type="chain" id="PRO_0000128688" description="Uncharacterized protein Cj0253">
    <location>
        <begin position="1"/>
        <end position="87"/>
    </location>
</feature>
<evidence type="ECO:0000305" key="1"/>
<organism>
    <name type="scientific">Campylobacter jejuni subsp. jejuni serotype O:2 (strain ATCC 700819 / NCTC 11168)</name>
    <dbReference type="NCBI Taxonomy" id="192222"/>
    <lineage>
        <taxon>Bacteria</taxon>
        <taxon>Pseudomonadati</taxon>
        <taxon>Campylobacterota</taxon>
        <taxon>Epsilonproteobacteria</taxon>
        <taxon>Campylobacterales</taxon>
        <taxon>Campylobacteraceae</taxon>
        <taxon>Campylobacter</taxon>
    </lineage>
</organism>
<sequence>MVNLCDLKKEPQINYPTFWDYKVIFEVHVKASEIFEEILGQREYKFKHSNSSASGKYQSYLLNVYVDSKKDRLDIFDKLKAKAKFVL</sequence>
<dbReference type="EMBL" id="AL111168">
    <property type="protein sequence ID" value="CAL34407.1"/>
    <property type="molecule type" value="Genomic_DNA"/>
</dbReference>
<dbReference type="PIR" id="D81443">
    <property type="entry name" value="D81443"/>
</dbReference>
<dbReference type="RefSeq" id="WP_002852023.1">
    <property type="nucleotide sequence ID" value="NZ_SZUC01000006.1"/>
</dbReference>
<dbReference type="RefSeq" id="YP_002343695.1">
    <property type="nucleotide sequence ID" value="NC_002163.1"/>
</dbReference>
<dbReference type="SMR" id="Q9PIP2"/>
<dbReference type="IntAct" id="Q9PIP2">
    <property type="interactions" value="31"/>
</dbReference>
<dbReference type="STRING" id="192222.Cj0253"/>
<dbReference type="PaxDb" id="192222-Cj0253"/>
<dbReference type="EnsemblBacteria" id="CAL34407">
    <property type="protein sequence ID" value="CAL34407"/>
    <property type="gene ID" value="Cj0253"/>
</dbReference>
<dbReference type="GeneID" id="904579"/>
<dbReference type="KEGG" id="cje:Cj0253"/>
<dbReference type="PATRIC" id="fig|192222.6.peg.247"/>
<dbReference type="eggNOG" id="COG2921">
    <property type="taxonomic scope" value="Bacteria"/>
</dbReference>
<dbReference type="HOGENOM" id="CLU_161438_3_0_7"/>
<dbReference type="OrthoDB" id="281538at2"/>
<dbReference type="Proteomes" id="UP000000799">
    <property type="component" value="Chromosome"/>
</dbReference>
<dbReference type="Gene3D" id="3.30.70.260">
    <property type="match status" value="1"/>
</dbReference>
<dbReference type="InterPro" id="IPR007454">
    <property type="entry name" value="UPF0250_YbeD-like"/>
</dbReference>
<dbReference type="InterPro" id="IPR027471">
    <property type="entry name" value="YbeD-like_sf"/>
</dbReference>
<dbReference type="Pfam" id="PF04359">
    <property type="entry name" value="DUF493"/>
    <property type="match status" value="1"/>
</dbReference>
<dbReference type="SUPFAM" id="SSF117991">
    <property type="entry name" value="YbeD/HP0495-like"/>
    <property type="match status" value="1"/>
</dbReference>